<reference key="1">
    <citation type="journal article" date="1996" name="J. Biol. Chem.">
        <title>Activation of protein-tyrosine phosphatase SH-PTP2 by a tyrosine-based activation motif of a novel brain molecule.</title>
        <authorList>
            <person name="Ohnishi H."/>
            <person name="Kubota M."/>
            <person name="Ohtake A."/>
            <person name="Sato K."/>
            <person name="Sano S."/>
        </authorList>
    </citation>
    <scope>NUCLEOTIDE SEQUENCE [MRNA] (ISOFORM 2)</scope>
    <source>
        <strain>BALB/cJ</strain>
        <tissue>Brain</tissue>
    </source>
</reference>
<reference key="2">
    <citation type="journal article" date="2005" name="Science">
        <title>The transcriptional landscape of the mammalian genome.</title>
        <authorList>
            <person name="Carninci P."/>
            <person name="Kasukawa T."/>
            <person name="Katayama S."/>
            <person name="Gough J."/>
            <person name="Frith M.C."/>
            <person name="Maeda N."/>
            <person name="Oyama R."/>
            <person name="Ravasi T."/>
            <person name="Lenhard B."/>
            <person name="Wells C."/>
            <person name="Kodzius R."/>
            <person name="Shimokawa K."/>
            <person name="Bajic V.B."/>
            <person name="Brenner S.E."/>
            <person name="Batalov S."/>
            <person name="Forrest A.R."/>
            <person name="Zavolan M."/>
            <person name="Davis M.J."/>
            <person name="Wilming L.G."/>
            <person name="Aidinis V."/>
            <person name="Allen J.E."/>
            <person name="Ambesi-Impiombato A."/>
            <person name="Apweiler R."/>
            <person name="Aturaliya R.N."/>
            <person name="Bailey T.L."/>
            <person name="Bansal M."/>
            <person name="Baxter L."/>
            <person name="Beisel K.W."/>
            <person name="Bersano T."/>
            <person name="Bono H."/>
            <person name="Chalk A.M."/>
            <person name="Chiu K.P."/>
            <person name="Choudhary V."/>
            <person name="Christoffels A."/>
            <person name="Clutterbuck D.R."/>
            <person name="Crowe M.L."/>
            <person name="Dalla E."/>
            <person name="Dalrymple B.P."/>
            <person name="de Bono B."/>
            <person name="Della Gatta G."/>
            <person name="di Bernardo D."/>
            <person name="Down T."/>
            <person name="Engstrom P."/>
            <person name="Fagiolini M."/>
            <person name="Faulkner G."/>
            <person name="Fletcher C.F."/>
            <person name="Fukushima T."/>
            <person name="Furuno M."/>
            <person name="Futaki S."/>
            <person name="Gariboldi M."/>
            <person name="Georgii-Hemming P."/>
            <person name="Gingeras T.R."/>
            <person name="Gojobori T."/>
            <person name="Green R.E."/>
            <person name="Gustincich S."/>
            <person name="Harbers M."/>
            <person name="Hayashi Y."/>
            <person name="Hensch T.K."/>
            <person name="Hirokawa N."/>
            <person name="Hill D."/>
            <person name="Huminiecki L."/>
            <person name="Iacono M."/>
            <person name="Ikeo K."/>
            <person name="Iwama A."/>
            <person name="Ishikawa T."/>
            <person name="Jakt M."/>
            <person name="Kanapin A."/>
            <person name="Katoh M."/>
            <person name="Kawasawa Y."/>
            <person name="Kelso J."/>
            <person name="Kitamura H."/>
            <person name="Kitano H."/>
            <person name="Kollias G."/>
            <person name="Krishnan S.P."/>
            <person name="Kruger A."/>
            <person name="Kummerfeld S.K."/>
            <person name="Kurochkin I.V."/>
            <person name="Lareau L.F."/>
            <person name="Lazarevic D."/>
            <person name="Lipovich L."/>
            <person name="Liu J."/>
            <person name="Liuni S."/>
            <person name="McWilliam S."/>
            <person name="Madan Babu M."/>
            <person name="Madera M."/>
            <person name="Marchionni L."/>
            <person name="Matsuda H."/>
            <person name="Matsuzawa S."/>
            <person name="Miki H."/>
            <person name="Mignone F."/>
            <person name="Miyake S."/>
            <person name="Morris K."/>
            <person name="Mottagui-Tabar S."/>
            <person name="Mulder N."/>
            <person name="Nakano N."/>
            <person name="Nakauchi H."/>
            <person name="Ng P."/>
            <person name="Nilsson R."/>
            <person name="Nishiguchi S."/>
            <person name="Nishikawa S."/>
            <person name="Nori F."/>
            <person name="Ohara O."/>
            <person name="Okazaki Y."/>
            <person name="Orlando V."/>
            <person name="Pang K.C."/>
            <person name="Pavan W.J."/>
            <person name="Pavesi G."/>
            <person name="Pesole G."/>
            <person name="Petrovsky N."/>
            <person name="Piazza S."/>
            <person name="Reed J."/>
            <person name="Reid J.F."/>
            <person name="Ring B.Z."/>
            <person name="Ringwald M."/>
            <person name="Rost B."/>
            <person name="Ruan Y."/>
            <person name="Salzberg S.L."/>
            <person name="Sandelin A."/>
            <person name="Schneider C."/>
            <person name="Schoenbach C."/>
            <person name="Sekiguchi K."/>
            <person name="Semple C.A."/>
            <person name="Seno S."/>
            <person name="Sessa L."/>
            <person name="Sheng Y."/>
            <person name="Shibata Y."/>
            <person name="Shimada H."/>
            <person name="Shimada K."/>
            <person name="Silva D."/>
            <person name="Sinclair B."/>
            <person name="Sperling S."/>
            <person name="Stupka E."/>
            <person name="Sugiura K."/>
            <person name="Sultana R."/>
            <person name="Takenaka Y."/>
            <person name="Taki K."/>
            <person name="Tammoja K."/>
            <person name="Tan S.L."/>
            <person name="Tang S."/>
            <person name="Taylor M.S."/>
            <person name="Tegner J."/>
            <person name="Teichmann S.A."/>
            <person name="Ueda H.R."/>
            <person name="van Nimwegen E."/>
            <person name="Verardo R."/>
            <person name="Wei C.L."/>
            <person name="Yagi K."/>
            <person name="Yamanishi H."/>
            <person name="Zabarovsky E."/>
            <person name="Zhu S."/>
            <person name="Zimmer A."/>
            <person name="Hide W."/>
            <person name="Bult C."/>
            <person name="Grimmond S.M."/>
            <person name="Teasdale R.D."/>
            <person name="Liu E.T."/>
            <person name="Brusic V."/>
            <person name="Quackenbush J."/>
            <person name="Wahlestedt C."/>
            <person name="Mattick J.S."/>
            <person name="Hume D.A."/>
            <person name="Kai C."/>
            <person name="Sasaki D."/>
            <person name="Tomaru Y."/>
            <person name="Fukuda S."/>
            <person name="Kanamori-Katayama M."/>
            <person name="Suzuki M."/>
            <person name="Aoki J."/>
            <person name="Arakawa T."/>
            <person name="Iida J."/>
            <person name="Imamura K."/>
            <person name="Itoh M."/>
            <person name="Kato T."/>
            <person name="Kawaji H."/>
            <person name="Kawagashira N."/>
            <person name="Kawashima T."/>
            <person name="Kojima M."/>
            <person name="Kondo S."/>
            <person name="Konno H."/>
            <person name="Nakano K."/>
            <person name="Ninomiya N."/>
            <person name="Nishio T."/>
            <person name="Okada M."/>
            <person name="Plessy C."/>
            <person name="Shibata K."/>
            <person name="Shiraki T."/>
            <person name="Suzuki S."/>
            <person name="Tagami M."/>
            <person name="Waki K."/>
            <person name="Watahiki A."/>
            <person name="Okamura-Oho Y."/>
            <person name="Suzuki H."/>
            <person name="Kawai J."/>
            <person name="Hayashizaki Y."/>
        </authorList>
    </citation>
    <scope>NUCLEOTIDE SEQUENCE [LARGE SCALE MRNA] (ISOFORM 1)</scope>
    <source>
        <strain>C57BL/6J</strain>
        <tissue>Head</tissue>
    </source>
</reference>
<reference key="3">
    <citation type="journal article" date="2004" name="Genome Res.">
        <title>The status, quality, and expansion of the NIH full-length cDNA project: the Mammalian Gene Collection (MGC).</title>
        <authorList>
            <consortium name="The MGC Project Team"/>
        </authorList>
    </citation>
    <scope>NUCLEOTIDE SEQUENCE [LARGE SCALE MRNA] (ISOFORMS 1 AND 2)</scope>
    <source>
        <strain>C57BL/6J</strain>
        <tissue>Brain</tissue>
        <tissue>Mammary tumor</tissue>
    </source>
</reference>
<reference key="4">
    <citation type="journal article" date="1993" name="Science">
        <title>SH2-containing phosphotyrosine phosphatase as a target of protein-tyrosine kinases.</title>
        <authorList>
            <person name="Feng G.-S."/>
            <person name="Hui C.-C."/>
            <person name="Pawson T."/>
        </authorList>
    </citation>
    <scope>NUCLEOTIDE SEQUENCE [MRNA] OF 1-552 (ISOFORM 2)</scope>
    <source>
        <strain>FVB/N</strain>
        <tissue>Mammary gland</tissue>
    </source>
</reference>
<reference key="5">
    <citation type="journal article" date="1993" name="Science">
        <title>Activation of a phosphotyrosine phosphatase by tyrosine phosphorylation.</title>
        <authorList>
            <person name="Vogel W."/>
            <person name="Lammers R."/>
            <person name="Huang J."/>
            <person name="Ullrich A."/>
        </authorList>
    </citation>
    <scope>TISSUE SPECIFICITY</scope>
</reference>
<reference key="6">
    <citation type="journal article" date="1996" name="Mol. Cell. Biol.">
        <title>Phosphorylation of tyrosine 720 in the platelet-derived growth factor alpha receptor is required for binding of Grb2 and SHP-2 but not for activation of Ras or cell proliferation.</title>
        <authorList>
            <person name="Bazenet C.E."/>
            <person name="Gelderloos J.A."/>
            <person name="Kazlauskas A."/>
        </authorList>
    </citation>
    <scope>INTERACTION WITH PDGFRA AND GRB2</scope>
    <scope>PHOSPHORYLATION</scope>
</reference>
<reference key="7">
    <citation type="journal article" date="1997" name="J. Biol. Chem.">
        <title>Interleukin-3 induces the association of the inositol 5-phosphatase SHIP with SHP2.</title>
        <authorList>
            <person name="Liu L."/>
            <person name="Damen J.E."/>
            <person name="Ware M.D."/>
            <person name="Krystal G."/>
        </authorList>
    </citation>
    <scope>INTERACTION WITH INPP5D</scope>
</reference>
<reference key="8">
    <citation type="journal article" date="1997" name="Nature">
        <title>A family of proteins that inhibit signalling through tyrosine kinase receptors.</title>
        <authorList>
            <person name="Kharitonenkov A."/>
            <person name="Chen Z."/>
            <person name="Sures I."/>
            <person name="Wang H."/>
            <person name="Schilling J."/>
            <person name="Ullrich A."/>
        </authorList>
    </citation>
    <scope>INTERACTION WITH PTPNS1</scope>
</reference>
<reference key="9">
    <citation type="journal article" date="1997" name="Oncogene">
        <title>The phosphatidylinositol polyphosphate 5-phosphatase SHIP and the protein tyrosine phosphatase SHP-2 form a complex in hematopoietic cells which can be regulated by BCR/ABL and growth factors.</title>
        <authorList>
            <person name="Sattler M."/>
            <person name="Salgia R."/>
            <person name="Shrikhande G."/>
            <person name="Verma S."/>
            <person name="Choi J.-L."/>
            <person name="Rohrschneider L.R."/>
            <person name="Griffin J.D."/>
        </authorList>
    </citation>
    <scope>INTERACTION WITH INPP5D</scope>
</reference>
<reference key="10">
    <citation type="journal article" date="1998" name="J. Biol. Chem.">
        <title>Identification of vascular endothelial growth factor receptor-1 tyrosine phosphorylation sites and binding of SH2 domain-containing molecules.</title>
        <authorList>
            <person name="Ito N."/>
            <person name="Wernstedt C."/>
            <person name="Engstrom U."/>
            <person name="Claesson-Welsh L."/>
        </authorList>
    </citation>
    <scope>INTERACTION WITH FLT1</scope>
</reference>
<reference key="11">
    <citation type="journal article" date="1998" name="Mol. Cell. Biol.">
        <title>SHP-1 binds and negatively modulates the c-Kit receptor by interaction with tyrosine 569 in the c-Kit juxtamembrane domain.</title>
        <authorList>
            <person name="Kozlowski M."/>
            <person name="Larose L."/>
            <person name="Lee F."/>
            <person name="Le D.M."/>
            <person name="Rottapel R."/>
            <person name="Siminovitch K.A."/>
        </authorList>
    </citation>
    <scope>INTERACTION WITH KIT</scope>
</reference>
<reference key="12">
    <citation type="journal article" date="1999" name="Blood">
        <title>Gab-family adapter proteins act downstream of cytokine and growth factor receptors and T- and B-cell antigen receptors.</title>
        <authorList>
            <person name="Nishida K."/>
            <person name="Yoshida Y."/>
            <person name="Itoh M."/>
            <person name="Fukada T."/>
            <person name="Ohtani T."/>
            <person name="Shirogane T."/>
            <person name="Atsumi T."/>
            <person name="Takahashi-Tezuka M."/>
            <person name="Ishihara K."/>
            <person name="Hibi M."/>
            <person name="Hirano T."/>
        </authorList>
    </citation>
    <scope>INTERACTION WITH GAB2</scope>
</reference>
<reference key="13">
    <citation type="journal article" date="1999" name="J. Biol. Chem.">
        <title>The carboxyl-terminal region of biliary glycoprotein controls its tyrosine phosphorylation and association with protein-tyrosine phosphatases SHP-1 and SHP-2 in epithelial cells.</title>
        <authorList>
            <person name="Huber M."/>
            <person name="Izzi L."/>
            <person name="Grondin P."/>
            <person name="Houde C."/>
            <person name="Kunath T."/>
            <person name="Veillette A."/>
            <person name="Beauchemin N."/>
        </authorList>
    </citation>
    <scope>INTERACTION WITH CEACAM1</scope>
</reference>
<reference key="14">
    <citation type="journal article" date="1999" name="J. Biol. Chem.">
        <title>gp49B1 inhibits IgE-initiated mast cell activation through both immunoreceptor tyrosine-based inhibitory motifs, recruitment of src homology 2 domain-containing phosphatase-1, and suppression of early and late calcium mobilization.</title>
        <authorList>
            <person name="Lu-Kuo J.M."/>
            <person name="Joyal D.M."/>
            <person name="Austen K.F."/>
            <person name="Katz H.R."/>
        </authorList>
    </citation>
    <scope>INTERACTION WITH LILRB4A</scope>
</reference>
<reference key="15">
    <citation type="journal article" date="1999" name="J. Biol. Chem.">
        <title>Identification of Tek/Tie2 binding partners. Binding to a multifunctional docking site mediates cell survival and migration.</title>
        <authorList>
            <person name="Jones N."/>
            <person name="Master Z."/>
            <person name="Jones J."/>
            <person name="Bouchard D."/>
            <person name="Gunji Y."/>
            <person name="Sasaki H."/>
            <person name="Daly R."/>
            <person name="Alitalo K."/>
            <person name="Dumont D.J."/>
        </authorList>
    </citation>
    <scope>INTERACTION WITH TEK/TIE2</scope>
</reference>
<reference key="16">
    <citation type="journal article" date="1999" name="J. Leukoc. Biol.">
        <title>Flt3 signaling involves tyrosyl-phosphorylation of SHP-2 and SHIP and their association with Grb2 and Shc in Baf3/Flt3 cells.</title>
        <authorList>
            <person name="Zhang S."/>
            <person name="Mantel C."/>
            <person name="Broxmeyer H.E."/>
        </authorList>
    </citation>
    <scope>PHOSPHORYLATION</scope>
    <scope>INTERACTION WITH GRB2</scope>
</reference>
<reference key="17">
    <citation type="journal article" date="1999" name="Oncogene">
        <title>Paired immunoglobulin-like receptor B (PIR-B) inhibits BCR-induced activation of Syk and Btk by SHP-1.</title>
        <authorList>
            <person name="Maeda A."/>
            <person name="Scharenberg A.M."/>
            <person name="Tsukada S."/>
            <person name="Bolen J.B."/>
            <person name="Kinet J.P."/>
            <person name="Kurosaki T."/>
        </authorList>
    </citation>
    <scope>INTERACTION WITH PIRB</scope>
</reference>
<reference key="18">
    <citation type="journal article" date="2000" name="J. Biol. Chem.">
        <title>p130Cas regulates the activity of AND-34, a novel Ral, Rap1, and R-Ras guanine nucleotide exchange factor.</title>
        <authorList>
            <person name="Gotoh T."/>
            <person name="Cai D."/>
            <person name="Tian X."/>
            <person name="Feig L.A."/>
            <person name="Lerner A."/>
        </authorList>
    </citation>
    <scope>INTERACTION WITH BCAR3</scope>
</reference>
<reference key="19">
    <citation type="journal article" date="2002" name="Mol. Biol. Cell">
        <title>The Shb adaptor protein binds to tyrosine 766 in the FGFR-1 and regulates the Ras/MEK/MAPK pathway via FRS2 phosphorylation in endothelial cells.</title>
        <authorList>
            <person name="Cross M.J."/>
            <person name="Lu L."/>
            <person name="Magnusson P."/>
            <person name="Nyqvist D."/>
            <person name="Holmqvist K."/>
            <person name="Welsh M."/>
            <person name="Claesson-Welsh L."/>
        </authorList>
    </citation>
    <scope>INTERACTION WITH SHB</scope>
</reference>
<reference key="20">
    <citation type="journal article" date="2003" name="J. Exp. Med.">
        <title>LIME, a novel transmembrane adaptor protein, associates with p56lck and mediates T cell activation.</title>
        <authorList>
            <person name="Hur E.M."/>
            <person name="Son M."/>
            <person name="Lee O.-H."/>
            <person name="Choi Y.B."/>
            <person name="Park C."/>
            <person name="Lee H."/>
            <person name="Yun Y."/>
        </authorList>
    </citation>
    <scope>INTERACTION WITH LIME1</scope>
</reference>
<reference key="21">
    <citation type="journal article" date="2005" name="Nat. Biotechnol.">
        <title>Immunoaffinity profiling of tyrosine phosphorylation in cancer cells.</title>
        <authorList>
            <person name="Rush J."/>
            <person name="Moritz A."/>
            <person name="Lee K.A."/>
            <person name="Guo A."/>
            <person name="Goss V.L."/>
            <person name="Spek E.J."/>
            <person name="Zhang H."/>
            <person name="Zha X.-M."/>
            <person name="Polakiewicz R.D."/>
            <person name="Comb M.J."/>
        </authorList>
    </citation>
    <scope>IDENTIFICATION BY MASS SPECTROMETRY [LARGE SCALE ANALYSIS]</scope>
</reference>
<reference key="22">
    <citation type="journal article" date="2006" name="Blood">
        <title>Identification of Y589 and Y599 in the juxtamembrane domain of Flt3 as ligand-induced autophosphorylation sites involved in binding of Src family kinases and the protein tyrosine phosphatase SHP2.</title>
        <authorList>
            <person name="Heiss E."/>
            <person name="Masson K."/>
            <person name="Sundberg C."/>
            <person name="Pedersen M."/>
            <person name="Sun J."/>
            <person name="Bengtsson S."/>
            <person name="Ronnstrand L."/>
        </authorList>
    </citation>
    <scope>INTERACTION WITH FLT3</scope>
</reference>
<reference key="23">
    <citation type="journal article" date="2006" name="Cancer Res.">
        <title>ROS fusion tyrosine kinase activates a SH2 domain-containing phosphatase-2/phosphatidylinositol 3-kinase/mammalian target of rapamycin signaling axis to form glioblastoma in mice.</title>
        <authorList>
            <person name="Charest A."/>
            <person name="Wilker E.W."/>
            <person name="McLaughlin M.E."/>
            <person name="Lane K."/>
            <person name="Gowda R."/>
            <person name="Coven S."/>
            <person name="McMahon K."/>
            <person name="Kovach S."/>
            <person name="Feng Y."/>
            <person name="Yaffe M.B."/>
            <person name="Jacks T."/>
            <person name="Housman D."/>
        </authorList>
    </citation>
    <scope>INTERACTION WITH ROS1</scope>
    <scope>PHOSPHORYLATION AT TYR-542 AND TYR-580</scope>
</reference>
<reference key="24">
    <citation type="journal article" date="2007" name="J. Immunol.">
        <title>Quantitative time-resolved phosphoproteomic analysis of mast cell signaling.</title>
        <authorList>
            <person name="Cao L."/>
            <person name="Yu K."/>
            <person name="Banh C."/>
            <person name="Nguyen V."/>
            <person name="Ritz A."/>
            <person name="Raphael B.J."/>
            <person name="Kawakami Y."/>
            <person name="Kawakami T."/>
            <person name="Salomon A.R."/>
        </authorList>
    </citation>
    <scope>PHOSPHORYLATION [LARGE SCALE ANALYSIS] AT TYR-62</scope>
    <scope>IDENTIFICATION BY MASS SPECTROMETRY [LARGE SCALE ANALYSIS]</scope>
    <source>
        <tissue>Mast cell</tissue>
    </source>
</reference>
<reference key="25">
    <citation type="journal article" date="2008" name="J. Proteome Res.">
        <title>Large-scale identification and evolution indexing of tyrosine phosphorylation sites from murine brain.</title>
        <authorList>
            <person name="Ballif B.A."/>
            <person name="Carey G.R."/>
            <person name="Sunyaev S.R."/>
            <person name="Gygi S.P."/>
        </authorList>
    </citation>
    <scope>PHOSPHORYLATION [LARGE SCALE ANALYSIS] AT TYR-62 AND TYR-66</scope>
    <scope>IDENTIFICATION BY MASS SPECTROMETRY [LARGE SCALE ANALYSIS]</scope>
    <source>
        <tissue>Brain</tissue>
    </source>
</reference>
<reference key="26">
    <citation type="journal article" date="2009" name="J. Cell Biol.">
        <title>Homophilic adhesion and CEACAM1-S regulate dimerization of CEACAM1-L and recruitment of SHP-2 and c-Src.</title>
        <authorList>
            <person name="Mueller M.M."/>
            <person name="Klaile E."/>
            <person name="Vorontsova O."/>
            <person name="Singer B.B."/>
            <person name="Obrink B."/>
        </authorList>
    </citation>
    <scope>INTERACTION WITH CEACAM1</scope>
</reference>
<reference key="27">
    <citation type="journal article" date="2010" name="Cell">
        <title>A tissue-specific atlas of mouse protein phosphorylation and expression.</title>
        <authorList>
            <person name="Huttlin E.L."/>
            <person name="Jedrychowski M.P."/>
            <person name="Elias J.E."/>
            <person name="Goswami T."/>
            <person name="Rad R."/>
            <person name="Beausoleil S.A."/>
            <person name="Villen J."/>
            <person name="Haas W."/>
            <person name="Sowa M.E."/>
            <person name="Gygi S.P."/>
        </authorList>
    </citation>
    <scope>PHOSPHORYLATION [LARGE SCALE ANALYSIS] AT TYR-62</scope>
    <scope>IDENTIFICATION BY MASS SPECTROMETRY [LARGE SCALE ANALYSIS]</scope>
    <source>
        <tissue>Brain</tissue>
        <tissue>Brown adipose tissue</tissue>
        <tissue>Heart</tissue>
        <tissue>Kidney</tissue>
        <tissue>Liver</tissue>
        <tissue>Lung</tissue>
        <tissue>Pancreas</tissue>
        <tissue>Spleen</tissue>
        <tissue>Testis</tissue>
    </source>
</reference>
<reference key="28">
    <citation type="journal article" date="2010" name="Nat. Immunol.">
        <title>An immunoglobulin-like receptor, Allergin-1, inhibits immunoglobulin E-mediated immediate hypersensitivity reactions.</title>
        <authorList>
            <person name="Hitomi K."/>
            <person name="Tahara-Hanaoka S."/>
            <person name="Someya S."/>
            <person name="Fujiki A."/>
            <person name="Tada H."/>
            <person name="Sugiyama T."/>
            <person name="Shibayama S."/>
            <person name="Shibuya K."/>
            <person name="Shibuya A."/>
        </authorList>
    </citation>
    <scope>INTERACTION WITH MILR1</scope>
</reference>
<reference key="29">
    <citation type="journal article" date="2004" name="Mol. Cell">
        <title>Shp2 regulates SRC family kinase activity and Ras/Erk activation by controlling Csk recruitment.</title>
        <authorList>
            <person name="Zhang S.Q."/>
            <person name="Yang W."/>
            <person name="Kontaridis M.I."/>
            <person name="Bivona T.G."/>
            <person name="Wen G."/>
            <person name="Araki T."/>
            <person name="Luo J."/>
            <person name="Thompson J.A."/>
            <person name="Schraven B.L."/>
            <person name="Philips M.R."/>
            <person name="Neel B.G."/>
        </authorList>
    </citation>
    <scope>FUNCTION</scope>
</reference>
<reference key="30">
    <citation type="journal article" date="2012" name="Sci. Signal.">
        <title>Mice lacking the ITIM-containing receptor G6b-B exhibit macrothrombocytopenia and aberrant platelet function.</title>
        <authorList>
            <person name="Mazharian A."/>
            <person name="Wang Y.J."/>
            <person name="Mori J."/>
            <person name="Bem D."/>
            <person name="Finney B."/>
            <person name="Heising S."/>
            <person name="Gissen P."/>
            <person name="White J.G."/>
            <person name="Berndt M.C."/>
            <person name="Gardiner E.E."/>
            <person name="Nieswandt B."/>
            <person name="Douglas M.R."/>
            <person name="Campbell R.D."/>
            <person name="Watson S.P."/>
            <person name="Senis Y.A."/>
        </authorList>
    </citation>
    <scope>INTERACTION WITH MPIG6B</scope>
</reference>
<reference key="31">
    <citation type="journal article" date="2013" name="Cell">
        <title>Induction of Siglec-G by RNA viruses inhibits the innate immune response by promoting RIG-I degradation.</title>
        <authorList>
            <person name="Chen W."/>
            <person name="Han C."/>
            <person name="Xie B."/>
            <person name="Hu X."/>
            <person name="Yu Q."/>
            <person name="Shi L."/>
            <person name="Wang Q."/>
            <person name="Li D."/>
            <person name="Wang J."/>
            <person name="Zheng P."/>
            <person name="Liu Y."/>
            <person name="Cao X."/>
        </authorList>
    </citation>
    <scope>INTERACTION WITH SIGLEC10</scope>
</reference>
<reference key="32">
    <citation type="journal article" date="2018" name="Bone Res.">
        <title>SHP2 regulates skeletal cell fate by modifying SOX9 expression and transcriptional activity.</title>
        <authorList>
            <person name="Zuo C."/>
            <person name="Wang L."/>
            <person name="Kamalesh R.M."/>
            <person name="Bowen M.E."/>
            <person name="Moore D.C."/>
            <person name="Dooner M.S."/>
            <person name="Reginato A.M."/>
            <person name="Wu Q."/>
            <person name="Schorl C."/>
            <person name="Song Y."/>
            <person name="Warman M.L."/>
            <person name="Neel B.G."/>
            <person name="Ehrlich M.G."/>
            <person name="Yang W."/>
        </authorList>
    </citation>
    <scope>FUNCTION</scope>
    <scope>DISRUPTION PHENOTYPE</scope>
</reference>
<reference key="33">
    <citation type="journal article" date="1994" name="Structure">
        <title>Crystal structures of peptide complexes of the amino-terminal SH2 domain of the Syp tyrosine phosphatase.</title>
        <authorList>
            <person name="Lee C.-H."/>
            <person name="Kominos D."/>
            <person name="Jacques S."/>
            <person name="Margolis B."/>
            <person name="Schlessinger J."/>
            <person name="Shoelson S.E."/>
            <person name="Kuriyan J."/>
        </authorList>
    </citation>
    <scope>X-RAY CRYSTALLOGRAPHY (2.05 ANGSTROMS) OF 4-103 IN COMPLEX WITH PDGFRB</scope>
    <scope>INTERACTION WITH PDGFRB</scope>
</reference>
<evidence type="ECO:0000250" key="1"/>
<evidence type="ECO:0000250" key="2">
    <source>
        <dbReference type="UniProtKB" id="P41499"/>
    </source>
</evidence>
<evidence type="ECO:0000250" key="3">
    <source>
        <dbReference type="UniProtKB" id="Q06124"/>
    </source>
</evidence>
<evidence type="ECO:0000255" key="4">
    <source>
        <dbReference type="PROSITE-ProRule" id="PRU00160"/>
    </source>
</evidence>
<evidence type="ECO:0000255" key="5">
    <source>
        <dbReference type="PROSITE-ProRule" id="PRU00191"/>
    </source>
</evidence>
<evidence type="ECO:0000255" key="6">
    <source>
        <dbReference type="PROSITE-ProRule" id="PRU10044"/>
    </source>
</evidence>
<evidence type="ECO:0000269" key="7">
    <source>
    </source>
</evidence>
<evidence type="ECO:0000269" key="8">
    <source>
    </source>
</evidence>
<evidence type="ECO:0000269" key="9">
    <source>
    </source>
</evidence>
<evidence type="ECO:0000269" key="10">
    <source>
    </source>
</evidence>
<evidence type="ECO:0000269" key="11">
    <source>
    </source>
</evidence>
<evidence type="ECO:0000269" key="12">
    <source>
    </source>
</evidence>
<evidence type="ECO:0000269" key="13">
    <source>
    </source>
</evidence>
<evidence type="ECO:0000269" key="14">
    <source>
    </source>
</evidence>
<evidence type="ECO:0000269" key="15">
    <source>
    </source>
</evidence>
<evidence type="ECO:0000269" key="16">
    <source>
    </source>
</evidence>
<evidence type="ECO:0000269" key="17">
    <source>
    </source>
</evidence>
<evidence type="ECO:0000269" key="18">
    <source>
    </source>
</evidence>
<evidence type="ECO:0000269" key="19">
    <source>
    </source>
</evidence>
<evidence type="ECO:0000269" key="20">
    <source>
    </source>
</evidence>
<evidence type="ECO:0000269" key="21">
    <source>
    </source>
</evidence>
<evidence type="ECO:0000269" key="22">
    <source>
    </source>
</evidence>
<evidence type="ECO:0000269" key="23">
    <source>
    </source>
</evidence>
<evidence type="ECO:0000269" key="24">
    <source>
    </source>
</evidence>
<evidence type="ECO:0000269" key="25">
    <source>
    </source>
</evidence>
<evidence type="ECO:0000269" key="26">
    <source>
    </source>
</evidence>
<evidence type="ECO:0000269" key="27">
    <source>
    </source>
</evidence>
<evidence type="ECO:0000269" key="28">
    <source>
    </source>
</evidence>
<evidence type="ECO:0000269" key="29">
    <source>
    </source>
</evidence>
<evidence type="ECO:0000269" key="30">
    <source>
    </source>
</evidence>
<evidence type="ECO:0000269" key="31">
    <source>
    </source>
</evidence>
<evidence type="ECO:0000305" key="32"/>
<evidence type="ECO:0007744" key="33">
    <source>
    </source>
</evidence>
<evidence type="ECO:0007744" key="34">
    <source>
    </source>
</evidence>
<evidence type="ECO:0007744" key="35">
    <source>
    </source>
</evidence>
<evidence type="ECO:0007829" key="36">
    <source>
        <dbReference type="PDB" id="1AYA"/>
    </source>
</evidence>
<evidence type="ECO:0007829" key="37">
    <source>
        <dbReference type="PDB" id="1AYD"/>
    </source>
</evidence>
<protein>
    <recommendedName>
        <fullName>Tyrosine-protein phosphatase non-receptor type 11</fullName>
        <ecNumber evidence="3">3.1.3.48</ecNumber>
    </recommendedName>
    <alternativeName>
        <fullName>Protein-tyrosine phosphatase SYP</fullName>
    </alternativeName>
    <alternativeName>
        <fullName>SH-PTP2</fullName>
        <shortName>SHP-2</shortName>
        <shortName>Shp2</shortName>
    </alternativeName>
</protein>
<proteinExistence type="evidence at protein level"/>
<keyword id="KW-0002">3D-structure</keyword>
<keyword id="KW-0007">Acetylation</keyword>
<keyword id="KW-0025">Alternative splicing</keyword>
<keyword id="KW-0963">Cytoplasm</keyword>
<keyword id="KW-0378">Hydrolase</keyword>
<keyword id="KW-0597">Phosphoprotein</keyword>
<keyword id="KW-0904">Protein phosphatase</keyword>
<keyword id="KW-1185">Reference proteome</keyword>
<keyword id="KW-0677">Repeat</keyword>
<keyword id="KW-0727">SH2 domain</keyword>
<organism>
    <name type="scientific">Mus musculus</name>
    <name type="common">Mouse</name>
    <dbReference type="NCBI Taxonomy" id="10090"/>
    <lineage>
        <taxon>Eukaryota</taxon>
        <taxon>Metazoa</taxon>
        <taxon>Chordata</taxon>
        <taxon>Craniata</taxon>
        <taxon>Vertebrata</taxon>
        <taxon>Euteleostomi</taxon>
        <taxon>Mammalia</taxon>
        <taxon>Eutheria</taxon>
        <taxon>Euarchontoglires</taxon>
        <taxon>Glires</taxon>
        <taxon>Rodentia</taxon>
        <taxon>Myomorpha</taxon>
        <taxon>Muroidea</taxon>
        <taxon>Muridae</taxon>
        <taxon>Murinae</taxon>
        <taxon>Mus</taxon>
        <taxon>Mus</taxon>
    </lineage>
</organism>
<comment type="function">
    <text evidence="3 15 22">Acts downstream of various receptor and cytoplasmic protein tyrosine kinases to participate in the signal transduction from the cell surface to the nucleus (PubMed:14967142). Positively regulates MAPK signal transduction pathway (By similarity). Dephosphorylates GAB1, ARHGAP35 and EGFR (By similarity). Dephosphorylates ROCK2 at 'Tyr-722' resulting in stimulation of its RhoA binding activity (By similarity). Dephosphorylates CDC73 (By similarity). Dephosphorylates SOX9 on tyrosine residues, leading to inactivate SOX9 and promote ossification (PubMed:29644115). Dephosphorylates tyrosine-phosphorylated NEDD9/CAS-L (By similarity).</text>
</comment>
<comment type="catalytic activity">
    <reaction evidence="6">
        <text>O-phospho-L-tyrosyl-[protein] + H2O = L-tyrosyl-[protein] + phosphate</text>
        <dbReference type="Rhea" id="RHEA:10684"/>
        <dbReference type="Rhea" id="RHEA-COMP:10136"/>
        <dbReference type="Rhea" id="RHEA-COMP:20101"/>
        <dbReference type="ChEBI" id="CHEBI:15377"/>
        <dbReference type="ChEBI" id="CHEBI:43474"/>
        <dbReference type="ChEBI" id="CHEBI:46858"/>
        <dbReference type="ChEBI" id="CHEBI:61978"/>
        <dbReference type="EC" id="3.1.3.48"/>
    </reaction>
</comment>
<comment type="subunit">
    <text evidence="2 3 7 8 9 10 11 12 13 14 16 17 18 19 20 21 23 25 26 27 28 29 30 31">Interacts with CD84 and with phosphorylated SIT1 and MZPL1. Interacts with FCRL4, FCRL6 and ANKHD1. Interacts with GAREM1 (tyrosine phosphorylated); the interaction increases MAPK/ERK activity and does not affect the GRB2/SOS complex formation (By similarity). Interacts with PTPNS1 and BCAR3. Interacts with phosphorylated LIME1. Interacts with SHB and INPP5D/SHIP1. Interacts with KIR2DL1; the interaction is enhanced by ARRB2 (By similarity). Interacts with GAB2. Interacts with TERT; the interaction retains TERT in the nucleus. Interacts with PECAM1 and FER. Interacts with EPHA2 (activated); participates in PTK2/FAK1 dephosphorylation in EPHA2 downstream signaling (By similarity). Interacts with MILR1 (tyrosine phosphorylated). Interacts with FLT1 (tyrosine-phosphorylated), FLT3 (tyrosine-phosphorylated), FLT4 (tyrosine-phosphorylated), KIT and GRB2. Interacts with ROS1; mediates PTPN11 phosphorylation. Interacts with PDGFRA (tyrosine phosphorylated). Interacts with PDGFRB (tyrosine phosphorylated); this interaction increases the PTPN11 phosphatase activity. Interacts (via SH2 domain) with TEK/TIE2 (tyrosine phosphorylated). Interacts with CEACAM1 (via cytoplasmic domain); this interaction depends on the monomer/dimer equilibrium and is phosphorylation-dependent (PubMed:19948503, PubMed:9867848). Interacts with MPIG6B (via ITIM motif) (PubMed:23112346). Interacts with SIGLEC10 (PubMed:23374343). Interacts with Lilrb4a (when tyrosine phosphorylated) (PubMed:10026201). Interacts with SIGLEC10 (By similarity). Interacts with CLEC12B (via ITIM motif); this interaction triggers dephosphorylation and activation of PTPN11. Interacts (via SH2 domains) with NEDD9/CAS-L; the interaction is enhanced when NEDD9/CAS-L is tyrosine phosphorylated (By similarity). Interacts with PIRB; when PIRB is phosphorylated by LYN at 'Tyr-794' and 'Tyr-824' (PubMed:10327049).</text>
</comment>
<comment type="interaction">
    <interactant intactId="EBI-397236">
        <id>P35235</id>
    </interactant>
    <interactant intactId="EBI-529924">
        <id>P30999</id>
        <label>Ctnnd1</label>
    </interactant>
    <organismsDiffer>false</organismsDiffer>
    <experiments>3</experiments>
</comment>
<comment type="interaction">
    <interactant intactId="EBI-397236">
        <id>P35235</id>
    </interactant>
    <interactant intactId="EBI-771815">
        <id>P16879</id>
        <label>Fes</label>
    </interactant>
    <organismsDiffer>false</organismsDiffer>
    <experiments>2</experiments>
</comment>
<comment type="interaction">
    <interactant intactId="EBI-397236">
        <id>P35235</id>
    </interactant>
    <interactant intactId="EBI-1688">
        <id>Q60631</id>
        <label>Grb2</label>
    </interactant>
    <organismsDiffer>false</organismsDiffer>
    <experiments>3</experiments>
</comment>
<comment type="interaction">
    <interactant intactId="EBI-397236">
        <id>P35235</id>
    </interactant>
    <interactant intactId="EBI-4410822">
        <id>P28776</id>
        <label>Ido1</label>
    </interactant>
    <organismsDiffer>false</organismsDiffer>
    <experiments>5</experiments>
</comment>
<comment type="interaction">
    <interactant intactId="EBI-397236">
        <id>P35235</id>
    </interactant>
    <interactant intactId="EBI-15728641">
        <id>P97484</id>
        <label>Lilrb3</label>
    </interactant>
    <organismsDiffer>false</organismsDiffer>
    <experiments>2</experiments>
</comment>
<comment type="interaction">
    <interactant intactId="EBI-397236">
        <id>P35235</id>
    </interactant>
    <interactant intactId="EBI-309647">
        <id>P15209</id>
        <label>Ntrk2</label>
    </interactant>
    <organismsDiffer>false</organismsDiffer>
    <experiments>2</experiments>
</comment>
<comment type="interaction">
    <interactant intactId="EBI-397236">
        <id>P35235</id>
    </interactant>
    <interactant intactId="EBI-8602514">
        <id>Q8K4V6</id>
        <label>Pirb</label>
    </interactant>
    <organismsDiffer>false</organismsDiffer>
    <experiments>3</experiments>
</comment>
<comment type="interaction">
    <interactant intactId="EBI-397236">
        <id>P35235</id>
    </interactant>
    <interactant intactId="EBI-448028">
        <id>P70196</id>
        <label>Traf6</label>
    </interactant>
    <organismsDiffer>false</organismsDiffer>
    <experiments>2</experiments>
</comment>
<comment type="interaction">
    <interactant intactId="EBI-397236">
        <id>P35235</id>
    </interactant>
    <interactant intactId="EBI-401755">
        <id>P62993</id>
        <label>GRB2</label>
    </interactant>
    <organismsDiffer>true</organismsDiffer>
    <experiments>7</experiments>
</comment>
<comment type="interaction">
    <interactant intactId="EBI-397236">
        <id>P35235</id>
    </interactant>
    <interactant intactId="EBI-1379503">
        <id>P10721</id>
        <label>KIT</label>
    </interactant>
    <organismsDiffer>true</organismsDiffer>
    <experiments>2</experiments>
</comment>
<comment type="subcellular location">
    <subcellularLocation>
        <location>Cytoplasm</location>
    </subcellularLocation>
</comment>
<comment type="alternative products">
    <event type="alternative splicing"/>
    <isoform>
        <id>P35235-2</id>
        <name>1</name>
        <sequence type="displayed"/>
    </isoform>
    <isoform>
        <id>P35235-1</id>
        <name>2</name>
        <sequence type="described" ref="VSP_060440"/>
    </isoform>
</comment>
<comment type="tissue specificity">
    <text evidence="24">Highly expressed in brain, heart and kidney.</text>
</comment>
<comment type="domain">
    <text>The SH2 domains repress phosphatase activity. Binding of these domains to phosphotyrosine-containing proteins relieves this auto-inhibition, possibly by inducing a conformational change in the enzyme.</text>
</comment>
<comment type="PTM">
    <text evidence="1 9 17 25">Phosphorylated on Tyr-542 and Tyr-580 upon receptor protein tyrosine kinase activation; which creates a binding site for GRB2 and other SH2-containing proteins. Phosphorylated upon activation of the receptor-type kinase FLT3. Phosphorylated by activated PDGFRB (By similarity). Phosphorylated upon activation of the receptor-type kinase PDGFRA.</text>
</comment>
<comment type="disruption phenotype">
    <text evidence="22">Conditional deletion in limb and head mesenchyme leads to increased cartilage mass and deficient ossification: osteochondroprogenitors become chondrocytes and not osteoblasts caused by inability of PTPN11/SHP2 to mediate tyrosine dephosphorylation of SOX9.</text>
</comment>
<comment type="similarity">
    <text evidence="32">Belongs to the protein-tyrosine phosphatase family. Non-receptor class 2 subfamily.</text>
</comment>
<feature type="initiator methionine" description="Removed" evidence="3">
    <location>
        <position position="1"/>
    </location>
</feature>
<feature type="chain" id="PRO_0000094768" description="Tyrosine-protein phosphatase non-receptor type 11">
    <location>
        <begin position="2"/>
        <end position="593"/>
    </location>
</feature>
<feature type="domain" description="SH2 1" evidence="5">
    <location>
        <begin position="6"/>
        <end position="102"/>
    </location>
</feature>
<feature type="domain" description="SH2 2" evidence="5">
    <location>
        <begin position="112"/>
        <end position="216"/>
    </location>
</feature>
<feature type="domain" description="Tyrosine-protein phosphatase" evidence="4">
    <location>
        <begin position="247"/>
        <end position="521"/>
    </location>
</feature>
<feature type="active site" description="Phosphocysteine intermediate" evidence="4 6">
    <location>
        <position position="459"/>
    </location>
</feature>
<feature type="binding site" evidence="1">
    <location>
        <position position="425"/>
    </location>
    <ligand>
        <name>substrate</name>
    </ligand>
</feature>
<feature type="binding site" evidence="1">
    <location>
        <begin position="459"/>
        <end position="465"/>
    </location>
    <ligand>
        <name>substrate</name>
    </ligand>
</feature>
<feature type="binding site" evidence="1">
    <location>
        <position position="506"/>
    </location>
    <ligand>
        <name>substrate</name>
    </ligand>
</feature>
<feature type="modified residue" description="N-acetylthreonine" evidence="3">
    <location>
        <position position="2"/>
    </location>
</feature>
<feature type="modified residue" description="Phosphotyrosine" evidence="33 34 35">
    <location>
        <position position="62"/>
    </location>
</feature>
<feature type="modified residue" description="Phosphotyrosine" evidence="34">
    <location>
        <position position="66"/>
    </location>
</feature>
<feature type="modified residue" description="Phosphotyrosine; by PDGFR" evidence="17">
    <location>
        <position position="542"/>
    </location>
</feature>
<feature type="modified residue" description="Phosphotyrosine; by PDGFR" evidence="17">
    <location>
        <position position="580"/>
    </location>
</feature>
<feature type="splice variant" id="VSP_060440" description="In isoform 2.">
    <original>G</original>
    <variation>GQALL</variation>
    <location>
        <position position="407"/>
    </location>
</feature>
<feature type="sequence conflict" description="In Ref. 2; BAE37500." evidence="32" ref="2">
    <original>E</original>
    <variation>G</variation>
    <location>
        <position position="390"/>
    </location>
</feature>
<feature type="helix" evidence="36">
    <location>
        <begin position="13"/>
        <end position="22"/>
    </location>
</feature>
<feature type="strand" evidence="36">
    <location>
        <begin position="28"/>
        <end position="33"/>
    </location>
</feature>
<feature type="strand" evidence="36">
    <location>
        <begin position="35"/>
        <end position="37"/>
    </location>
</feature>
<feature type="strand" evidence="36">
    <location>
        <begin position="41"/>
        <end position="47"/>
    </location>
</feature>
<feature type="strand" evidence="36">
    <location>
        <begin position="50"/>
        <end position="55"/>
    </location>
</feature>
<feature type="strand" evidence="36">
    <location>
        <begin position="63"/>
        <end position="68"/>
    </location>
</feature>
<feature type="strand" evidence="36">
    <location>
        <begin position="71"/>
        <end position="73"/>
    </location>
</feature>
<feature type="helix" evidence="36">
    <location>
        <begin position="74"/>
        <end position="83"/>
    </location>
</feature>
<feature type="helix" evidence="37">
    <location>
        <begin position="85"/>
        <end position="87"/>
    </location>
</feature>
<feature type="turn" evidence="37">
    <location>
        <begin position="91"/>
        <end position="93"/>
    </location>
</feature>
<name>PTN11_MOUSE</name>
<dbReference type="EC" id="3.1.3.48" evidence="3"/>
<dbReference type="EMBL" id="D84372">
    <property type="protein sequence ID" value="BAA12328.1"/>
    <property type="molecule type" value="mRNA"/>
</dbReference>
<dbReference type="EMBL" id="AK159501">
    <property type="protein sequence ID" value="BAE35134.1"/>
    <property type="molecule type" value="mRNA"/>
</dbReference>
<dbReference type="EMBL" id="AK159587">
    <property type="protein sequence ID" value="BAE35207.1"/>
    <property type="molecule type" value="mRNA"/>
</dbReference>
<dbReference type="EMBL" id="AK163809">
    <property type="protein sequence ID" value="BAE37500.1"/>
    <property type="molecule type" value="mRNA"/>
</dbReference>
<dbReference type="EMBL" id="BC057398">
    <property type="protein sequence ID" value="AAH57398.1"/>
    <property type="molecule type" value="mRNA"/>
</dbReference>
<dbReference type="EMBL" id="BC059278">
    <property type="protein sequence ID" value="AAH59278.1"/>
    <property type="molecule type" value="mRNA"/>
</dbReference>
<dbReference type="EMBL" id="L08663">
    <property type="status" value="NOT_ANNOTATED_CDS"/>
    <property type="molecule type" value="mRNA"/>
</dbReference>
<dbReference type="CCDS" id="CCDS39247.1">
    <molecule id="P35235-1"/>
</dbReference>
<dbReference type="CCDS" id="CCDS51637.1">
    <molecule id="P35235-2"/>
</dbReference>
<dbReference type="PIR" id="A46209">
    <property type="entry name" value="A46209"/>
</dbReference>
<dbReference type="RefSeq" id="NP_001103462.1">
    <molecule id="P35235-2"/>
    <property type="nucleotide sequence ID" value="NM_001109992.1"/>
</dbReference>
<dbReference type="RefSeq" id="NP_035332.1">
    <molecule id="P35235-1"/>
    <property type="nucleotide sequence ID" value="NM_011202.3"/>
</dbReference>
<dbReference type="PDB" id="1AYA">
    <property type="method" value="X-ray"/>
    <property type="resolution" value="2.05 A"/>
    <property type="chains" value="A/B=4-103"/>
</dbReference>
<dbReference type="PDB" id="1AYB">
    <property type="method" value="X-ray"/>
    <property type="resolution" value="3.00 A"/>
    <property type="chains" value="A=4-103"/>
</dbReference>
<dbReference type="PDB" id="1AYC">
    <property type="method" value="X-ray"/>
    <property type="resolution" value="2.30 A"/>
    <property type="chains" value="A=4-103"/>
</dbReference>
<dbReference type="PDB" id="1AYD">
    <property type="method" value="X-ray"/>
    <property type="resolution" value="2.20 A"/>
    <property type="chains" value="A=4-103"/>
</dbReference>
<dbReference type="PDBsum" id="1AYA"/>
<dbReference type="PDBsum" id="1AYB"/>
<dbReference type="PDBsum" id="1AYC"/>
<dbReference type="PDBsum" id="1AYD"/>
<dbReference type="SMR" id="P35235"/>
<dbReference type="BioGRID" id="202477">
    <property type="interactions" value="44"/>
</dbReference>
<dbReference type="CORUM" id="P35235"/>
<dbReference type="DIP" id="DIP-29669N"/>
<dbReference type="FunCoup" id="P35235">
    <property type="interactions" value="3680"/>
</dbReference>
<dbReference type="IntAct" id="P35235">
    <property type="interactions" value="33"/>
</dbReference>
<dbReference type="MINT" id="P35235"/>
<dbReference type="STRING" id="10090.ENSMUSP00000058757"/>
<dbReference type="BindingDB" id="P35235"/>
<dbReference type="ChEMBL" id="CHEMBL2620"/>
<dbReference type="GlyGen" id="P35235">
    <property type="glycosylation" value="3 sites, 1 N-linked glycan (1 site), 1 O-linked glycan (1 site)"/>
</dbReference>
<dbReference type="iPTMnet" id="P35235"/>
<dbReference type="PhosphoSitePlus" id="P35235"/>
<dbReference type="SwissPalm" id="P35235"/>
<dbReference type="jPOST" id="P35235"/>
<dbReference type="PaxDb" id="10090-ENSMUSP00000098333"/>
<dbReference type="PeptideAtlas" id="P35235"/>
<dbReference type="ProteomicsDB" id="301936">
    <molecule id="P35235-2"/>
</dbReference>
<dbReference type="ProteomicsDB" id="301937">
    <molecule id="P35235-2"/>
</dbReference>
<dbReference type="Pumba" id="P35235"/>
<dbReference type="Antibodypedia" id="3948">
    <property type="antibodies" value="1467 antibodies from 47 providers"/>
</dbReference>
<dbReference type="DNASU" id="19247"/>
<dbReference type="Ensembl" id="ENSMUST00000054547.9">
    <molecule id="P35235-1"/>
    <property type="protein sequence ID" value="ENSMUSP00000058757.8"/>
    <property type="gene ID" value="ENSMUSG00000043733.15"/>
</dbReference>
<dbReference type="Ensembl" id="ENSMUST00000100770.9">
    <molecule id="P35235-2"/>
    <property type="protein sequence ID" value="ENSMUSP00000098333.3"/>
    <property type="gene ID" value="ENSMUSG00000043733.15"/>
</dbReference>
<dbReference type="GeneID" id="19247"/>
<dbReference type="KEGG" id="mmu:19247"/>
<dbReference type="UCSC" id="uc008zio.2">
    <molecule id="P35235-2"/>
    <property type="organism name" value="mouse"/>
</dbReference>
<dbReference type="UCSC" id="uc008zip.2">
    <molecule id="P35235-2"/>
    <property type="organism name" value="mouse"/>
</dbReference>
<dbReference type="AGR" id="MGI:99511"/>
<dbReference type="CTD" id="5781"/>
<dbReference type="MGI" id="MGI:99511">
    <property type="gene designation" value="Ptpn11"/>
</dbReference>
<dbReference type="VEuPathDB" id="HostDB:ENSMUSG00000043733"/>
<dbReference type="eggNOG" id="KOG0790">
    <property type="taxonomic scope" value="Eukaryota"/>
</dbReference>
<dbReference type="GeneTree" id="ENSGT00940000153876"/>
<dbReference type="HOGENOM" id="CLU_001645_9_10_1"/>
<dbReference type="InParanoid" id="P35235"/>
<dbReference type="OMA" id="NGWLWNG"/>
<dbReference type="OrthoDB" id="13254at9989"/>
<dbReference type="PhylomeDB" id="P35235"/>
<dbReference type="TreeFam" id="TF351632"/>
<dbReference type="Reactome" id="R-MMU-1059683">
    <property type="pathway name" value="Interleukin-6 signaling"/>
</dbReference>
<dbReference type="Reactome" id="R-MMU-109704">
    <property type="pathway name" value="PI3K Cascade"/>
</dbReference>
<dbReference type="Reactome" id="R-MMU-110056">
    <property type="pathway name" value="MAPK3 (ERK1) activation"/>
</dbReference>
<dbReference type="Reactome" id="R-MMU-112411">
    <property type="pathway name" value="MAPK1 (ERK2) activation"/>
</dbReference>
<dbReference type="Reactome" id="R-MMU-114604">
    <property type="pathway name" value="GPVI-mediated activation cascade"/>
</dbReference>
<dbReference type="Reactome" id="R-MMU-1257604">
    <property type="pathway name" value="PIP3 activates AKT signaling"/>
</dbReference>
<dbReference type="Reactome" id="R-MMU-1295596">
    <property type="pathway name" value="Spry regulation of FGF signaling"/>
</dbReference>
<dbReference type="Reactome" id="R-MMU-1433557">
    <property type="pathway name" value="Signaling by SCF-KIT"/>
</dbReference>
<dbReference type="Reactome" id="R-MMU-180292">
    <property type="pathway name" value="GAB1 signalosome"/>
</dbReference>
<dbReference type="Reactome" id="R-MMU-186763">
    <property type="pathway name" value="Downstream signal transduction"/>
</dbReference>
<dbReference type="Reactome" id="R-MMU-210990">
    <property type="pathway name" value="PECAM1 interactions"/>
</dbReference>
<dbReference type="Reactome" id="R-MMU-210993">
    <property type="pathway name" value="Tie2 Signaling"/>
</dbReference>
<dbReference type="Reactome" id="R-MMU-389513">
    <property type="pathway name" value="Co-inhibition by CTLA4"/>
</dbReference>
<dbReference type="Reactome" id="R-MMU-389948">
    <property type="pathway name" value="Co-inhibition by PD-1"/>
</dbReference>
<dbReference type="Reactome" id="R-MMU-432142">
    <property type="pathway name" value="Platelet sensitization by LDL"/>
</dbReference>
<dbReference type="Reactome" id="R-MMU-512988">
    <property type="pathway name" value="Interleukin-3, Interleukin-5 and GM-CSF signaling"/>
</dbReference>
<dbReference type="Reactome" id="R-MMU-5654689">
    <property type="pathway name" value="PI-3K cascade:FGFR1"/>
</dbReference>
<dbReference type="Reactome" id="R-MMU-5654693">
    <property type="pathway name" value="FRS-mediated FGFR1 signaling"/>
</dbReference>
<dbReference type="Reactome" id="R-MMU-5654695">
    <property type="pathway name" value="PI-3K cascade:FGFR2"/>
</dbReference>
<dbReference type="Reactome" id="R-MMU-5654700">
    <property type="pathway name" value="FRS-mediated FGFR2 signaling"/>
</dbReference>
<dbReference type="Reactome" id="R-MMU-5654706">
    <property type="pathway name" value="FRS-mediated FGFR3 signaling"/>
</dbReference>
<dbReference type="Reactome" id="R-MMU-5654710">
    <property type="pathway name" value="PI-3K cascade:FGFR3"/>
</dbReference>
<dbReference type="Reactome" id="R-MMU-5654712">
    <property type="pathway name" value="FRS-mediated FGFR4 signaling"/>
</dbReference>
<dbReference type="Reactome" id="R-MMU-5654720">
    <property type="pathway name" value="PI-3K cascade:FGFR4"/>
</dbReference>
<dbReference type="Reactome" id="R-MMU-5654726">
    <property type="pathway name" value="Negative regulation of FGFR1 signaling"/>
</dbReference>
<dbReference type="Reactome" id="R-MMU-5654727">
    <property type="pathway name" value="Negative regulation of FGFR2 signaling"/>
</dbReference>
<dbReference type="Reactome" id="R-MMU-5654732">
    <property type="pathway name" value="Negative regulation of FGFR3 signaling"/>
</dbReference>
<dbReference type="Reactome" id="R-MMU-5654733">
    <property type="pathway name" value="Negative regulation of FGFR4 signaling"/>
</dbReference>
<dbReference type="Reactome" id="R-MMU-6811558">
    <property type="pathway name" value="PI5P, PP2A and IER3 Regulate PI3K/AKT Signaling"/>
</dbReference>
<dbReference type="Reactome" id="R-MMU-8853659">
    <property type="pathway name" value="RET signaling"/>
</dbReference>
<dbReference type="Reactome" id="R-MMU-8854691">
    <property type="pathway name" value="Interleukin-20 family signaling"/>
</dbReference>
<dbReference type="Reactome" id="R-MMU-8865999">
    <property type="pathway name" value="MET activates PTPN11"/>
</dbReference>
<dbReference type="Reactome" id="R-MMU-8934593">
    <property type="pathway name" value="Regulation of RUNX1 Expression and Activity"/>
</dbReference>
<dbReference type="Reactome" id="R-MMU-912694">
    <property type="pathway name" value="Regulation of IFNA/IFNB signaling"/>
</dbReference>
<dbReference type="Reactome" id="R-MMU-936964">
    <property type="pathway name" value="Activation of IRF3, IRF7 mediated by TBK1, IKKEpsilon (IKBKE)"/>
</dbReference>
<dbReference type="Reactome" id="R-MMU-9674555">
    <property type="pathway name" value="Signaling by CSF3 (G-CSF)"/>
</dbReference>
<dbReference type="Reactome" id="R-MMU-9927353">
    <property type="pathway name" value="Co-inhibition by BTLA"/>
</dbReference>
<dbReference type="SABIO-RK" id="P35235"/>
<dbReference type="BioGRID-ORCS" id="19247">
    <property type="hits" value="26 hits in 81 CRISPR screens"/>
</dbReference>
<dbReference type="CD-CODE" id="CE726F99">
    <property type="entry name" value="Postsynaptic density"/>
</dbReference>
<dbReference type="ChiTaRS" id="Ptpn11">
    <property type="organism name" value="mouse"/>
</dbReference>
<dbReference type="EvolutionaryTrace" id="P35235"/>
<dbReference type="PRO" id="PR:P35235"/>
<dbReference type="Proteomes" id="UP000000589">
    <property type="component" value="Chromosome 5"/>
</dbReference>
<dbReference type="RNAct" id="P35235">
    <property type="molecule type" value="protein"/>
</dbReference>
<dbReference type="Bgee" id="ENSMUSG00000043733">
    <property type="expression patterns" value="Expressed in renal corpuscle and 244 other cell types or tissues"/>
</dbReference>
<dbReference type="GO" id="GO:0005737">
    <property type="term" value="C:cytoplasm"/>
    <property type="evidence" value="ECO:0000250"/>
    <property type="project" value="UniProtKB"/>
</dbReference>
<dbReference type="GO" id="GO:0005829">
    <property type="term" value="C:cytosol"/>
    <property type="evidence" value="ECO:0000314"/>
    <property type="project" value="MGI"/>
</dbReference>
<dbReference type="GO" id="GO:0005634">
    <property type="term" value="C:nucleus"/>
    <property type="evidence" value="ECO:0000250"/>
    <property type="project" value="UniProtKB"/>
</dbReference>
<dbReference type="GO" id="GO:0032991">
    <property type="term" value="C:protein-containing complex"/>
    <property type="evidence" value="ECO:0007669"/>
    <property type="project" value="Ensembl"/>
</dbReference>
<dbReference type="GO" id="GO:0045296">
    <property type="term" value="F:cadherin binding"/>
    <property type="evidence" value="ECO:0007669"/>
    <property type="project" value="Ensembl"/>
</dbReference>
<dbReference type="GO" id="GO:0050839">
    <property type="term" value="F:cell adhesion molecule binding"/>
    <property type="evidence" value="ECO:0000353"/>
    <property type="project" value="UniProtKB"/>
</dbReference>
<dbReference type="GO" id="GO:0005158">
    <property type="term" value="F:insulin receptor binding"/>
    <property type="evidence" value="ECO:0007669"/>
    <property type="project" value="Ensembl"/>
</dbReference>
<dbReference type="GO" id="GO:0004726">
    <property type="term" value="F:non-membrane spanning protein tyrosine phosphatase activity"/>
    <property type="evidence" value="ECO:0000314"/>
    <property type="project" value="MGI"/>
</dbReference>
<dbReference type="GO" id="GO:0051428">
    <property type="term" value="F:peptide hormone receptor binding"/>
    <property type="evidence" value="ECO:0000353"/>
    <property type="project" value="MGI"/>
</dbReference>
<dbReference type="GO" id="GO:0004721">
    <property type="term" value="F:phosphoprotein phosphatase activity"/>
    <property type="evidence" value="ECO:0000315"/>
    <property type="project" value="MGI"/>
</dbReference>
<dbReference type="GO" id="GO:0001784">
    <property type="term" value="F:phosphotyrosine residue binding"/>
    <property type="evidence" value="ECO:0007669"/>
    <property type="project" value="Ensembl"/>
</dbReference>
<dbReference type="GO" id="GO:0019901">
    <property type="term" value="F:protein kinase binding"/>
    <property type="evidence" value="ECO:0000353"/>
    <property type="project" value="ARUK-UCL"/>
</dbReference>
<dbReference type="GO" id="GO:0004725">
    <property type="term" value="F:protein tyrosine phosphatase activity"/>
    <property type="evidence" value="ECO:0000314"/>
    <property type="project" value="MGI"/>
</dbReference>
<dbReference type="GO" id="GO:0030971">
    <property type="term" value="F:receptor tyrosine kinase binding"/>
    <property type="evidence" value="ECO:0000353"/>
    <property type="project" value="UniProtKB"/>
</dbReference>
<dbReference type="GO" id="GO:0030159">
    <property type="term" value="F:signaling receptor complex adaptor activity"/>
    <property type="evidence" value="ECO:0007669"/>
    <property type="project" value="Ensembl"/>
</dbReference>
<dbReference type="GO" id="GO:0036302">
    <property type="term" value="P:atrioventricular canal development"/>
    <property type="evidence" value="ECO:0007669"/>
    <property type="project" value="Ensembl"/>
</dbReference>
<dbReference type="GO" id="GO:0007409">
    <property type="term" value="P:axonogenesis"/>
    <property type="evidence" value="ECO:0000315"/>
    <property type="project" value="MGI"/>
</dbReference>
<dbReference type="GO" id="GO:0060020">
    <property type="term" value="P:Bergmann glial cell differentiation"/>
    <property type="evidence" value="ECO:0000315"/>
    <property type="project" value="MGI"/>
</dbReference>
<dbReference type="GO" id="GO:0071364">
    <property type="term" value="P:cellular response to epidermal growth factor stimulus"/>
    <property type="evidence" value="ECO:0000250"/>
    <property type="project" value="UniProtKB"/>
</dbReference>
<dbReference type="GO" id="GO:0071260">
    <property type="term" value="P:cellular response to mechanical stimulus"/>
    <property type="evidence" value="ECO:0007669"/>
    <property type="project" value="Ensembl"/>
</dbReference>
<dbReference type="GO" id="GO:0021697">
    <property type="term" value="P:cerebellar cortex formation"/>
    <property type="evidence" value="ECO:0000315"/>
    <property type="project" value="MGI"/>
</dbReference>
<dbReference type="GO" id="GO:0000077">
    <property type="term" value="P:DNA damage checkpoint signaling"/>
    <property type="evidence" value="ECO:0000315"/>
    <property type="project" value="MGI"/>
</dbReference>
<dbReference type="GO" id="GO:0048013">
    <property type="term" value="P:ephrin receptor signaling pathway"/>
    <property type="evidence" value="ECO:0000250"/>
    <property type="project" value="UniProtKB"/>
</dbReference>
<dbReference type="GO" id="GO:0007173">
    <property type="term" value="P:epidermal growth factor receptor signaling pathway"/>
    <property type="evidence" value="ECO:0000316"/>
    <property type="project" value="MGI"/>
</dbReference>
<dbReference type="GO" id="GO:0060325">
    <property type="term" value="P:face morphogenesis"/>
    <property type="evidence" value="ECO:0007669"/>
    <property type="project" value="Ensembl"/>
</dbReference>
<dbReference type="GO" id="GO:0008543">
    <property type="term" value="P:fibroblast growth factor receptor signaling pathway"/>
    <property type="evidence" value="ECO:0007669"/>
    <property type="project" value="Ensembl"/>
</dbReference>
<dbReference type="GO" id="GO:0048806">
    <property type="term" value="P:genitalia development"/>
    <property type="evidence" value="ECO:0007669"/>
    <property type="project" value="Ensembl"/>
</dbReference>
<dbReference type="GO" id="GO:0042593">
    <property type="term" value="P:glucose homeostasis"/>
    <property type="evidence" value="ECO:0000315"/>
    <property type="project" value="MGI"/>
</dbReference>
<dbReference type="GO" id="GO:0048873">
    <property type="term" value="P:homeostasis of number of cells within a tissue"/>
    <property type="evidence" value="ECO:0000315"/>
    <property type="project" value="MGI"/>
</dbReference>
<dbReference type="GO" id="GO:0042445">
    <property type="term" value="P:hormone metabolic process"/>
    <property type="evidence" value="ECO:0000315"/>
    <property type="project" value="MGI"/>
</dbReference>
<dbReference type="GO" id="GO:0009755">
    <property type="term" value="P:hormone-mediated signaling pathway"/>
    <property type="evidence" value="ECO:0000314"/>
    <property type="project" value="MGI"/>
</dbReference>
<dbReference type="GO" id="GO:0048839">
    <property type="term" value="P:inner ear development"/>
    <property type="evidence" value="ECO:0007669"/>
    <property type="project" value="Ensembl"/>
</dbReference>
<dbReference type="GO" id="GO:0007229">
    <property type="term" value="P:integrin-mediated signaling pathway"/>
    <property type="evidence" value="ECO:0000315"/>
    <property type="project" value="MGI"/>
</dbReference>
<dbReference type="GO" id="GO:0061582">
    <property type="term" value="P:intestinal epithelial cell migration"/>
    <property type="evidence" value="ECO:0000315"/>
    <property type="project" value="MGI"/>
</dbReference>
<dbReference type="GO" id="GO:0006629">
    <property type="term" value="P:lipid metabolic process"/>
    <property type="evidence" value="ECO:0000315"/>
    <property type="project" value="MGI"/>
</dbReference>
<dbReference type="GO" id="GO:0035855">
    <property type="term" value="P:megakaryocyte development"/>
    <property type="evidence" value="ECO:0000315"/>
    <property type="project" value="MGI"/>
</dbReference>
<dbReference type="GO" id="GO:0032528">
    <property type="term" value="P:microvillus organization"/>
    <property type="evidence" value="ECO:0000315"/>
    <property type="project" value="MGI"/>
</dbReference>
<dbReference type="GO" id="GO:0035264">
    <property type="term" value="P:multicellular organism growth"/>
    <property type="evidence" value="ECO:0000315"/>
    <property type="project" value="MGI"/>
</dbReference>
<dbReference type="GO" id="GO:0033629">
    <property type="term" value="P:negative regulation of cell adhesion mediated by integrin"/>
    <property type="evidence" value="ECO:0000315"/>
    <property type="project" value="MGI"/>
</dbReference>
<dbReference type="GO" id="GO:0032331">
    <property type="term" value="P:negative regulation of chondrocyte differentiation"/>
    <property type="evidence" value="ECO:0000315"/>
    <property type="project" value="UniProtKB"/>
</dbReference>
<dbReference type="GO" id="GO:0051463">
    <property type="term" value="P:negative regulation of cortisol secretion"/>
    <property type="evidence" value="ECO:0000315"/>
    <property type="project" value="MGI"/>
</dbReference>
<dbReference type="GO" id="GO:0060125">
    <property type="term" value="P:negative regulation of growth hormone secretion"/>
    <property type="evidence" value="ECO:0000315"/>
    <property type="project" value="MGI"/>
</dbReference>
<dbReference type="GO" id="GO:0046888">
    <property type="term" value="P:negative regulation of hormone secretion"/>
    <property type="evidence" value="ECO:0000315"/>
    <property type="project" value="MGI"/>
</dbReference>
<dbReference type="GO" id="GO:0046676">
    <property type="term" value="P:negative regulation of insulin secretion"/>
    <property type="evidence" value="ECO:0000315"/>
    <property type="project" value="MGI"/>
</dbReference>
<dbReference type="GO" id="GO:1902564">
    <property type="term" value="P:negative regulation of neutrophil activation"/>
    <property type="evidence" value="ECO:0007669"/>
    <property type="project" value="Ensembl"/>
</dbReference>
<dbReference type="GO" id="GO:0042130">
    <property type="term" value="P:negative regulation of T cell proliferation"/>
    <property type="evidence" value="ECO:0007669"/>
    <property type="project" value="Ensembl"/>
</dbReference>
<dbReference type="GO" id="GO:0032480">
    <property type="term" value="P:negative regulation of type I interferon production"/>
    <property type="evidence" value="ECO:0007669"/>
    <property type="project" value="Ensembl"/>
</dbReference>
<dbReference type="GO" id="GO:0048011">
    <property type="term" value="P:neurotrophin TRK receptor signaling pathway"/>
    <property type="evidence" value="ECO:0000315"/>
    <property type="project" value="MGI"/>
</dbReference>
<dbReference type="GO" id="GO:0035265">
    <property type="term" value="P:organ growth"/>
    <property type="evidence" value="ECO:0000315"/>
    <property type="project" value="MGI"/>
</dbReference>
<dbReference type="GO" id="GO:0035335">
    <property type="term" value="P:peptidyl-tyrosine dephosphorylation"/>
    <property type="evidence" value="ECO:0000250"/>
    <property type="project" value="UniProtKB"/>
</dbReference>
<dbReference type="GO" id="GO:0030220">
    <property type="term" value="P:platelet formation"/>
    <property type="evidence" value="ECO:0000316"/>
    <property type="project" value="MGI"/>
</dbReference>
<dbReference type="GO" id="GO:0048008">
    <property type="term" value="P:platelet-derived growth factor receptor signaling pathway"/>
    <property type="evidence" value="ECO:0000316"/>
    <property type="project" value="MGI"/>
</dbReference>
<dbReference type="GO" id="GO:0046326">
    <property type="term" value="P:positive regulation of D-glucose import"/>
    <property type="evidence" value="ECO:0007669"/>
    <property type="project" value="Ensembl"/>
</dbReference>
<dbReference type="GO" id="GO:0070374">
    <property type="term" value="P:positive regulation of ERK1 and ERK2 cascade"/>
    <property type="evidence" value="ECO:0000316"/>
    <property type="project" value="MGI"/>
</dbReference>
<dbReference type="GO" id="GO:0046887">
    <property type="term" value="P:positive regulation of hormone secretion"/>
    <property type="evidence" value="ECO:0000315"/>
    <property type="project" value="MGI"/>
</dbReference>
<dbReference type="GO" id="GO:0046628">
    <property type="term" value="P:positive regulation of insulin receptor signaling pathway"/>
    <property type="evidence" value="ECO:0007669"/>
    <property type="project" value="Ensembl"/>
</dbReference>
<dbReference type="GO" id="GO:0032728">
    <property type="term" value="P:positive regulation of interferon-beta production"/>
    <property type="evidence" value="ECO:0000315"/>
    <property type="project" value="ARUK-UCL"/>
</dbReference>
<dbReference type="GO" id="GO:0031666">
    <property type="term" value="P:positive regulation of lipopolysaccharide-mediated signaling pathway"/>
    <property type="evidence" value="ECO:0000315"/>
    <property type="project" value="ARUK-UCL"/>
</dbReference>
<dbReference type="GO" id="GO:0045931">
    <property type="term" value="P:positive regulation of mitotic cell cycle"/>
    <property type="evidence" value="ECO:0000316"/>
    <property type="project" value="MGI"/>
</dbReference>
<dbReference type="GO" id="GO:0045778">
    <property type="term" value="P:positive regulation of ossification"/>
    <property type="evidence" value="ECO:0000315"/>
    <property type="project" value="UniProtKB"/>
</dbReference>
<dbReference type="GO" id="GO:0051897">
    <property type="term" value="P:positive regulation of phosphatidylinositol 3-kinase/protein kinase B signal transduction"/>
    <property type="evidence" value="ECO:0007669"/>
    <property type="project" value="Ensembl"/>
</dbReference>
<dbReference type="GO" id="GO:0009967">
    <property type="term" value="P:positive regulation of signal transduction"/>
    <property type="evidence" value="ECO:0000315"/>
    <property type="project" value="MGI"/>
</dbReference>
<dbReference type="GO" id="GO:0032760">
    <property type="term" value="P:positive regulation of tumor necrosis factor production"/>
    <property type="evidence" value="ECO:0000316"/>
    <property type="project" value="ARUK-UCL"/>
</dbReference>
<dbReference type="GO" id="GO:0033628">
    <property type="term" value="P:regulation of cell adhesion mediated by integrin"/>
    <property type="evidence" value="ECO:0000250"/>
    <property type="project" value="UniProtKB"/>
</dbReference>
<dbReference type="GO" id="GO:0043408">
    <property type="term" value="P:regulation of MAPK cascade"/>
    <property type="evidence" value="ECO:0000315"/>
    <property type="project" value="MGI"/>
</dbReference>
<dbReference type="GO" id="GO:0046825">
    <property type="term" value="P:regulation of protein export from nucleus"/>
    <property type="evidence" value="ECO:0000315"/>
    <property type="project" value="MGI"/>
</dbReference>
<dbReference type="GO" id="GO:0043254">
    <property type="term" value="P:regulation of protein-containing complex assembly"/>
    <property type="evidence" value="ECO:0007669"/>
    <property type="project" value="Ensembl"/>
</dbReference>
<dbReference type="GO" id="GO:0007165">
    <property type="term" value="P:signal transduction"/>
    <property type="evidence" value="ECO:0000315"/>
    <property type="project" value="MGI"/>
</dbReference>
<dbReference type="GO" id="GO:0006641">
    <property type="term" value="P:triglyceride metabolic process"/>
    <property type="evidence" value="ECO:0000315"/>
    <property type="project" value="MGI"/>
</dbReference>
<dbReference type="GO" id="GO:0042311">
    <property type="term" value="P:vasodilation"/>
    <property type="evidence" value="ECO:0007669"/>
    <property type="project" value="Ensembl"/>
</dbReference>
<dbReference type="CDD" id="cd14605">
    <property type="entry name" value="PTPc-N11"/>
    <property type="match status" value="1"/>
</dbReference>
<dbReference type="CDD" id="cd09931">
    <property type="entry name" value="SH2_C-SH2_SHP_like"/>
    <property type="match status" value="1"/>
</dbReference>
<dbReference type="CDD" id="cd10340">
    <property type="entry name" value="SH2_N-SH2_SHP_like"/>
    <property type="match status" value="1"/>
</dbReference>
<dbReference type="FunFam" id="3.30.505.10:FF:000012">
    <property type="entry name" value="Tyrosine-protein phosphatase non-receptor type"/>
    <property type="match status" value="1"/>
</dbReference>
<dbReference type="FunFam" id="3.30.505.10:FF:000018">
    <property type="entry name" value="Tyrosine-protein phosphatase non-receptor type"/>
    <property type="match status" value="1"/>
</dbReference>
<dbReference type="FunFam" id="3.90.190.10:FF:000018">
    <property type="entry name" value="Tyrosine-protein phosphatase non-receptor type"/>
    <property type="match status" value="1"/>
</dbReference>
<dbReference type="Gene3D" id="3.90.190.10">
    <property type="entry name" value="Protein tyrosine phosphatase superfamily"/>
    <property type="match status" value="1"/>
</dbReference>
<dbReference type="Gene3D" id="3.30.505.10">
    <property type="entry name" value="SH2 domain"/>
    <property type="match status" value="2"/>
</dbReference>
<dbReference type="InterPro" id="IPR029021">
    <property type="entry name" value="Prot-tyrosine_phosphatase-like"/>
</dbReference>
<dbReference type="InterPro" id="IPR000242">
    <property type="entry name" value="PTP_cat"/>
</dbReference>
<dbReference type="InterPro" id="IPR000980">
    <property type="entry name" value="SH2"/>
</dbReference>
<dbReference type="InterPro" id="IPR036860">
    <property type="entry name" value="SH2_dom_sf"/>
</dbReference>
<dbReference type="InterPro" id="IPR016130">
    <property type="entry name" value="Tyr_Pase_AS"/>
</dbReference>
<dbReference type="InterPro" id="IPR003595">
    <property type="entry name" value="Tyr_Pase_cat"/>
</dbReference>
<dbReference type="InterPro" id="IPR000387">
    <property type="entry name" value="Tyr_Pase_dom"/>
</dbReference>
<dbReference type="InterPro" id="IPR012152">
    <property type="entry name" value="Tyr_Pase_non-rcpt_typ-6/11"/>
</dbReference>
<dbReference type="PANTHER" id="PTHR46559">
    <property type="entry name" value="TYROSINE-PROTEIN PHOSPHATASE NON-RECEPTOR TYPE 11"/>
    <property type="match status" value="1"/>
</dbReference>
<dbReference type="PANTHER" id="PTHR46559:SF1">
    <property type="entry name" value="TYROSINE-PROTEIN PHOSPHATASE NON-RECEPTOR TYPE 11"/>
    <property type="match status" value="1"/>
</dbReference>
<dbReference type="Pfam" id="PF00017">
    <property type="entry name" value="SH2"/>
    <property type="match status" value="2"/>
</dbReference>
<dbReference type="Pfam" id="PF00102">
    <property type="entry name" value="Y_phosphatase"/>
    <property type="match status" value="1"/>
</dbReference>
<dbReference type="PIRSF" id="PIRSF000929">
    <property type="entry name" value="Tyr-Ptase_nr_6"/>
    <property type="match status" value="1"/>
</dbReference>
<dbReference type="PRINTS" id="PR00700">
    <property type="entry name" value="PRTYPHPHTASE"/>
</dbReference>
<dbReference type="PRINTS" id="PR00401">
    <property type="entry name" value="SH2DOMAIN"/>
</dbReference>
<dbReference type="SMART" id="SM00194">
    <property type="entry name" value="PTPc"/>
    <property type="match status" value="1"/>
</dbReference>
<dbReference type="SMART" id="SM00404">
    <property type="entry name" value="PTPc_motif"/>
    <property type="match status" value="1"/>
</dbReference>
<dbReference type="SMART" id="SM00252">
    <property type="entry name" value="SH2"/>
    <property type="match status" value="2"/>
</dbReference>
<dbReference type="SUPFAM" id="SSF52799">
    <property type="entry name" value="(Phosphotyrosine protein) phosphatases II"/>
    <property type="match status" value="1"/>
</dbReference>
<dbReference type="SUPFAM" id="SSF55550">
    <property type="entry name" value="SH2 domain"/>
    <property type="match status" value="2"/>
</dbReference>
<dbReference type="PROSITE" id="PS50001">
    <property type="entry name" value="SH2"/>
    <property type="match status" value="2"/>
</dbReference>
<dbReference type="PROSITE" id="PS00383">
    <property type="entry name" value="TYR_PHOSPHATASE_1"/>
    <property type="match status" value="1"/>
</dbReference>
<dbReference type="PROSITE" id="PS50056">
    <property type="entry name" value="TYR_PHOSPHATASE_2"/>
    <property type="match status" value="1"/>
</dbReference>
<dbReference type="PROSITE" id="PS50055">
    <property type="entry name" value="TYR_PHOSPHATASE_PTP"/>
    <property type="match status" value="1"/>
</dbReference>
<gene>
    <name type="primary">Ptpn11</name>
</gene>
<sequence length="593" mass="68035">MTSRRWFHPNITGVEAENLLLTRGVDGSFLARPSKSNPGDFTLSVRRNGAVTHIKIQNTGDYYDLYGGEKFATLAELVQYYMEHHGQLKEKNGDVIELKYPLNCADPTSERWFHGHLSGKEAEKLLTEKGKHGSFLVRESQSHPGDFVLSVRTGDDKGESNDGKSKVTHVMIRCQELKYDVGGGERFDSLTDLVEHYKKNPMVETLGTVLQLKQPLNTTRINAAEIESRVRELSKLAETTDKVKQGFWEEFETLQQQECKLLYSRKEGQRQENKNKNRYKNILPFDHTRVVLHDGDPNEPVSDYINANIIMPEFETKCNNSKPKKSYIATQGCLQNTVNDFWRMVFQENSRVIVMTTKEVERGKSKCVKYWPDEYALKEYGVMRVRNVKESAAHDYTLRELKLSKVGQGNTERTVWQYHFRTWPDHGVPSDPGGVLDFLEEVHHKQESIVDAGPVVVHCSAGIGRTGTFIVIDILIDIIREKGVDCDIDVPKTIQMVRSQRSGMVQTEAQYRFIYMAVQHYIETLQRRIEEEQKSKRKGHEYTNIKYSLVDQTSGDQSPLPPCTPTPPCAEMREDSARVYENVGLMQQQRSFR</sequence>
<accession>P35235</accession>
<accession>Q3TQ84</accession>
<accession>Q64509</accession>
<accession>Q6PCL5</accession>